<feature type="chain" id="PRO_0000163341" description="Ribosome maturation factor RimM">
    <location>
        <begin position="1"/>
        <end position="176"/>
    </location>
</feature>
<feature type="domain" description="PRC barrel" evidence="1">
    <location>
        <begin position="93"/>
        <end position="166"/>
    </location>
</feature>
<evidence type="ECO:0000255" key="1">
    <source>
        <dbReference type="HAMAP-Rule" id="MF_00014"/>
    </source>
</evidence>
<comment type="function">
    <text evidence="1">An accessory protein needed during the final step in the assembly of 30S ribosomal subunit, possibly for assembly of the head region. Essential for efficient processing of 16S rRNA. May be needed both before and after RbfA during the maturation of 16S rRNA. It has affinity for free ribosomal 30S subunits but not for 70S ribosomes.</text>
</comment>
<comment type="subunit">
    <text evidence="1">Binds ribosomal protein uS19.</text>
</comment>
<comment type="subcellular location">
    <subcellularLocation>
        <location evidence="1">Cytoplasm</location>
    </subcellularLocation>
</comment>
<comment type="domain">
    <text evidence="1">The PRC barrel domain binds ribosomal protein uS19.</text>
</comment>
<comment type="similarity">
    <text evidence="1">Belongs to the RimM family.</text>
</comment>
<gene>
    <name evidence="1" type="primary">rimM</name>
    <name type="ordered locus">RPA0243</name>
</gene>
<proteinExistence type="inferred from homology"/>
<organism>
    <name type="scientific">Rhodopseudomonas palustris (strain ATCC BAA-98 / CGA009)</name>
    <dbReference type="NCBI Taxonomy" id="258594"/>
    <lineage>
        <taxon>Bacteria</taxon>
        <taxon>Pseudomonadati</taxon>
        <taxon>Pseudomonadota</taxon>
        <taxon>Alphaproteobacteria</taxon>
        <taxon>Hyphomicrobiales</taxon>
        <taxon>Nitrobacteraceae</taxon>
        <taxon>Rhodopseudomonas</taxon>
    </lineage>
</organism>
<sequence>MPSGLICVARIGAPHGVRGAVRLWSFTADPFAVSDYGPLVTKDGARQFEIASAREAKSHLVVTLKGVTTRDEAERLNGVELYVARDKLPPTEADEYYHADLIGLAAVTTTGDPLGKVVAIHNFGAGDIIEIAPPSGPTLLLPFTNAVVPTVDLAVGQVVIEPPNEIEGDTPNHPEA</sequence>
<keyword id="KW-0143">Chaperone</keyword>
<keyword id="KW-0963">Cytoplasm</keyword>
<keyword id="KW-0690">Ribosome biogenesis</keyword>
<keyword id="KW-0698">rRNA processing</keyword>
<name>RIMM_RHOPA</name>
<protein>
    <recommendedName>
        <fullName evidence="1">Ribosome maturation factor RimM</fullName>
    </recommendedName>
</protein>
<dbReference type="EMBL" id="BX572593">
    <property type="protein sequence ID" value="CAE25687.1"/>
    <property type="molecule type" value="Genomic_DNA"/>
</dbReference>
<dbReference type="RefSeq" id="WP_011155811.1">
    <property type="nucleotide sequence ID" value="NZ_CP116810.1"/>
</dbReference>
<dbReference type="SMR" id="Q6ND66"/>
<dbReference type="STRING" id="258594.RPA0243"/>
<dbReference type="GeneID" id="66891250"/>
<dbReference type="eggNOG" id="COG0806">
    <property type="taxonomic scope" value="Bacteria"/>
</dbReference>
<dbReference type="HOGENOM" id="CLU_077636_0_1_5"/>
<dbReference type="PhylomeDB" id="Q6ND66"/>
<dbReference type="GO" id="GO:0005737">
    <property type="term" value="C:cytoplasm"/>
    <property type="evidence" value="ECO:0007669"/>
    <property type="project" value="UniProtKB-SubCell"/>
</dbReference>
<dbReference type="GO" id="GO:0005840">
    <property type="term" value="C:ribosome"/>
    <property type="evidence" value="ECO:0007669"/>
    <property type="project" value="InterPro"/>
</dbReference>
<dbReference type="GO" id="GO:0043022">
    <property type="term" value="F:ribosome binding"/>
    <property type="evidence" value="ECO:0007669"/>
    <property type="project" value="InterPro"/>
</dbReference>
<dbReference type="GO" id="GO:0042274">
    <property type="term" value="P:ribosomal small subunit biogenesis"/>
    <property type="evidence" value="ECO:0007669"/>
    <property type="project" value="UniProtKB-UniRule"/>
</dbReference>
<dbReference type="GO" id="GO:0006364">
    <property type="term" value="P:rRNA processing"/>
    <property type="evidence" value="ECO:0007669"/>
    <property type="project" value="UniProtKB-UniRule"/>
</dbReference>
<dbReference type="Gene3D" id="2.30.30.240">
    <property type="entry name" value="PRC-barrel domain"/>
    <property type="match status" value="1"/>
</dbReference>
<dbReference type="Gene3D" id="2.40.30.60">
    <property type="entry name" value="RimM"/>
    <property type="match status" value="1"/>
</dbReference>
<dbReference type="HAMAP" id="MF_00014">
    <property type="entry name" value="Ribosome_mat_RimM"/>
    <property type="match status" value="1"/>
</dbReference>
<dbReference type="InterPro" id="IPR011033">
    <property type="entry name" value="PRC_barrel-like_sf"/>
</dbReference>
<dbReference type="InterPro" id="IPR056792">
    <property type="entry name" value="PRC_RimM"/>
</dbReference>
<dbReference type="InterPro" id="IPR011961">
    <property type="entry name" value="RimM"/>
</dbReference>
<dbReference type="InterPro" id="IPR002676">
    <property type="entry name" value="RimM_N"/>
</dbReference>
<dbReference type="InterPro" id="IPR036976">
    <property type="entry name" value="RimM_N_sf"/>
</dbReference>
<dbReference type="InterPro" id="IPR009000">
    <property type="entry name" value="Transl_B-barrel_sf"/>
</dbReference>
<dbReference type="NCBIfam" id="TIGR02273">
    <property type="entry name" value="16S_RimM"/>
    <property type="match status" value="1"/>
</dbReference>
<dbReference type="PANTHER" id="PTHR33692">
    <property type="entry name" value="RIBOSOME MATURATION FACTOR RIMM"/>
    <property type="match status" value="1"/>
</dbReference>
<dbReference type="PANTHER" id="PTHR33692:SF1">
    <property type="entry name" value="RIBOSOME MATURATION FACTOR RIMM"/>
    <property type="match status" value="1"/>
</dbReference>
<dbReference type="Pfam" id="PF24986">
    <property type="entry name" value="PRC_RimM"/>
    <property type="match status" value="1"/>
</dbReference>
<dbReference type="Pfam" id="PF01782">
    <property type="entry name" value="RimM"/>
    <property type="match status" value="1"/>
</dbReference>
<dbReference type="SUPFAM" id="SSF50346">
    <property type="entry name" value="PRC-barrel domain"/>
    <property type="match status" value="1"/>
</dbReference>
<dbReference type="SUPFAM" id="SSF50447">
    <property type="entry name" value="Translation proteins"/>
    <property type="match status" value="1"/>
</dbReference>
<accession>Q6ND66</accession>
<reference key="1">
    <citation type="journal article" date="2004" name="Nat. Biotechnol.">
        <title>Complete genome sequence of the metabolically versatile photosynthetic bacterium Rhodopseudomonas palustris.</title>
        <authorList>
            <person name="Larimer F.W."/>
            <person name="Chain P."/>
            <person name="Hauser L."/>
            <person name="Lamerdin J.E."/>
            <person name="Malfatti S."/>
            <person name="Do L."/>
            <person name="Land M.L."/>
            <person name="Pelletier D.A."/>
            <person name="Beatty J.T."/>
            <person name="Lang A.S."/>
            <person name="Tabita F.R."/>
            <person name="Gibson J.L."/>
            <person name="Hanson T.E."/>
            <person name="Bobst C."/>
            <person name="Torres y Torres J.L."/>
            <person name="Peres C."/>
            <person name="Harrison F.H."/>
            <person name="Gibson J."/>
            <person name="Harwood C.S."/>
        </authorList>
    </citation>
    <scope>NUCLEOTIDE SEQUENCE [LARGE SCALE GENOMIC DNA]</scope>
    <source>
        <strain>ATCC BAA-98 / CGA009</strain>
    </source>
</reference>